<proteinExistence type="inferred from homology"/>
<reference key="1">
    <citation type="journal article" date="2013" name="G3 (Bethesda)">
        <title>Comparative genomics of a plant-pathogenic fungus, Pyrenophora tritici-repentis, reveals transduplication and the impact of repeat elements on pathogenicity and population divergence.</title>
        <authorList>
            <person name="Manning V.A."/>
            <person name="Pandelova I."/>
            <person name="Dhillon B."/>
            <person name="Wilhelm L.J."/>
            <person name="Goodwin S.B."/>
            <person name="Berlin A.M."/>
            <person name="Figueroa M."/>
            <person name="Freitag M."/>
            <person name="Hane J.K."/>
            <person name="Henrissat B."/>
            <person name="Holman W.H."/>
            <person name="Kodira C.D."/>
            <person name="Martin J."/>
            <person name="Oliver R.P."/>
            <person name="Robbertse B."/>
            <person name="Schackwitz W."/>
            <person name="Schwartz D.C."/>
            <person name="Spatafora J.W."/>
            <person name="Turgeon B.G."/>
            <person name="Yandava C."/>
            <person name="Young S."/>
            <person name="Zhou S."/>
            <person name="Zeng Q."/>
            <person name="Grigoriev I.V."/>
            <person name="Ma L.-J."/>
            <person name="Ciuffetti L.M."/>
        </authorList>
    </citation>
    <scope>NUCLEOTIDE SEQUENCE [LARGE SCALE GENOMIC DNA]</scope>
    <source>
        <strain>Pt-1C-BFP</strain>
    </source>
</reference>
<accession>B2WC78</accession>
<feature type="chain" id="PRO_0000408680" description="Probable endonuclease lcl3">
    <location>
        <begin position="1"/>
        <end position="271"/>
    </location>
</feature>
<feature type="transmembrane region" description="Helical" evidence="2">
    <location>
        <begin position="38"/>
        <end position="55"/>
    </location>
</feature>
<feature type="domain" description="TNase-like" evidence="3">
    <location>
        <begin position="76"/>
        <end position="236"/>
    </location>
</feature>
<feature type="region of interest" description="Disordered" evidence="4">
    <location>
        <begin position="1"/>
        <end position="27"/>
    </location>
</feature>
<feature type="region of interest" description="Disordered" evidence="4">
    <location>
        <begin position="226"/>
        <end position="271"/>
    </location>
</feature>
<feature type="compositionally biased region" description="Polar residues" evidence="4">
    <location>
        <begin position="15"/>
        <end position="27"/>
    </location>
</feature>
<feature type="compositionally biased region" description="Basic and acidic residues" evidence="4">
    <location>
        <begin position="253"/>
        <end position="271"/>
    </location>
</feature>
<feature type="active site" evidence="3">
    <location>
        <position position="127"/>
    </location>
</feature>
<feature type="active site" evidence="3">
    <location>
        <position position="135"/>
    </location>
</feature>
<feature type="active site" evidence="3">
    <location>
        <position position="175"/>
    </location>
</feature>
<feature type="binding site" evidence="3">
    <location>
        <position position="132"/>
    </location>
    <ligand>
        <name>Ca(2+)</name>
        <dbReference type="ChEBI" id="CHEBI:29108"/>
    </ligand>
</feature>
<evidence type="ECO:0000250" key="1"/>
<evidence type="ECO:0000255" key="2"/>
<evidence type="ECO:0000255" key="3">
    <source>
        <dbReference type="PROSITE-ProRule" id="PRU00272"/>
    </source>
</evidence>
<evidence type="ECO:0000256" key="4">
    <source>
        <dbReference type="SAM" id="MobiDB-lite"/>
    </source>
</evidence>
<evidence type="ECO:0000305" key="5"/>
<keyword id="KW-0106">Calcium</keyword>
<keyword id="KW-0255">Endonuclease</keyword>
<keyword id="KW-0378">Hydrolase</keyword>
<keyword id="KW-0472">Membrane</keyword>
<keyword id="KW-0479">Metal-binding</keyword>
<keyword id="KW-0496">Mitochondrion</keyword>
<keyword id="KW-0540">Nuclease</keyword>
<keyword id="KW-1185">Reference proteome</keyword>
<keyword id="KW-0812">Transmembrane</keyword>
<keyword id="KW-1133">Transmembrane helix</keyword>
<organism>
    <name type="scientific">Pyrenophora tritici-repentis (strain Pt-1C-BFP)</name>
    <name type="common">Wheat tan spot fungus</name>
    <name type="synonym">Drechslera tritici-repentis</name>
    <dbReference type="NCBI Taxonomy" id="426418"/>
    <lineage>
        <taxon>Eukaryota</taxon>
        <taxon>Fungi</taxon>
        <taxon>Dikarya</taxon>
        <taxon>Ascomycota</taxon>
        <taxon>Pezizomycotina</taxon>
        <taxon>Dothideomycetes</taxon>
        <taxon>Pleosporomycetidae</taxon>
        <taxon>Pleosporales</taxon>
        <taxon>Pleosporineae</taxon>
        <taxon>Pleosporaceae</taxon>
        <taxon>Pyrenophora</taxon>
    </lineage>
</organism>
<sequence>MRWPWSGDDHEQNKSSRLWATSPKSSDWPSTLVEPRTLIATLALTVSTVAGVRLYKTYLRRIPTVNHIKPNYFRRKSLFGQVTSVGDADNFRLYHTPGGRIAGWGLLPWKRIPTKREDLTKQTLHIRIAGVDAPELAHWGREAQPFSKEAHDWLINLIHNRRVRAYIYRRDQYDRVVAQVYVRRWLFRKDVGLEMLRAGLATVYEAKTGAEFGTVEDKYRAAEQKARDSKVGMWAKPTLRQRLGGAPTQPPESPREYKNRHNAAEKLKKPG</sequence>
<comment type="subcellular location">
    <subcellularLocation>
        <location>Mitochondrion</location>
    </subcellularLocation>
    <subcellularLocation>
        <location evidence="1">Membrane</location>
        <topology evidence="1">Single-pass membrane protein</topology>
    </subcellularLocation>
</comment>
<comment type="similarity">
    <text evidence="5">Belongs to the LCL3 family.</text>
</comment>
<gene>
    <name type="primary">lcl3</name>
    <name type="ORF">PTRG_07587</name>
</gene>
<dbReference type="EC" id="3.1.-.-"/>
<dbReference type="EMBL" id="DS231622">
    <property type="protein sequence ID" value="EDU50506.1"/>
    <property type="molecule type" value="Genomic_DNA"/>
</dbReference>
<dbReference type="RefSeq" id="XP_001937919.1">
    <property type="nucleotide sequence ID" value="XM_001937884.1"/>
</dbReference>
<dbReference type="SMR" id="B2WC78"/>
<dbReference type="FunCoup" id="B2WC78">
    <property type="interactions" value="13"/>
</dbReference>
<dbReference type="STRING" id="426418.B2WC78"/>
<dbReference type="EnsemblFungi" id="EDU50506">
    <property type="protein sequence ID" value="EDU50506"/>
    <property type="gene ID" value="PTRG_07587"/>
</dbReference>
<dbReference type="GeneID" id="6345859"/>
<dbReference type="KEGG" id="ptrr:6345859"/>
<dbReference type="eggNOG" id="ENOG502RZZQ">
    <property type="taxonomic scope" value="Eukaryota"/>
</dbReference>
<dbReference type="HOGENOM" id="CLU_046484_0_1_1"/>
<dbReference type="InParanoid" id="B2WC78"/>
<dbReference type="OMA" id="IYHTPGG"/>
<dbReference type="OrthoDB" id="12991at28556"/>
<dbReference type="Proteomes" id="UP000001471">
    <property type="component" value="Unassembled WGS sequence"/>
</dbReference>
<dbReference type="GO" id="GO:0016020">
    <property type="term" value="C:membrane"/>
    <property type="evidence" value="ECO:0007669"/>
    <property type="project" value="UniProtKB-SubCell"/>
</dbReference>
<dbReference type="GO" id="GO:0005739">
    <property type="term" value="C:mitochondrion"/>
    <property type="evidence" value="ECO:0007669"/>
    <property type="project" value="UniProtKB-SubCell"/>
</dbReference>
<dbReference type="GO" id="GO:0004519">
    <property type="term" value="F:endonuclease activity"/>
    <property type="evidence" value="ECO:0007669"/>
    <property type="project" value="UniProtKB-KW"/>
</dbReference>
<dbReference type="GO" id="GO:0046872">
    <property type="term" value="F:metal ion binding"/>
    <property type="evidence" value="ECO:0007669"/>
    <property type="project" value="UniProtKB-KW"/>
</dbReference>
<dbReference type="FunFam" id="2.40.50.90:FF:000029">
    <property type="entry name" value="Probable endonuclease lcl3"/>
    <property type="match status" value="1"/>
</dbReference>
<dbReference type="Gene3D" id="2.40.50.90">
    <property type="match status" value="1"/>
</dbReference>
<dbReference type="InterPro" id="IPR035437">
    <property type="entry name" value="SNase_OB-fold_sf"/>
</dbReference>
<dbReference type="InterPro" id="IPR016071">
    <property type="entry name" value="Staphylococal_nuclease_OB-fold"/>
</dbReference>
<dbReference type="PANTHER" id="PTHR12302">
    <property type="entry name" value="EBNA2 BINDING PROTEIN P100"/>
    <property type="match status" value="1"/>
</dbReference>
<dbReference type="PANTHER" id="PTHR12302:SF3">
    <property type="entry name" value="SERINE_THREONINE-PROTEIN KINASE 31"/>
    <property type="match status" value="1"/>
</dbReference>
<dbReference type="Pfam" id="PF00565">
    <property type="entry name" value="SNase"/>
    <property type="match status" value="1"/>
</dbReference>
<dbReference type="SMART" id="SM00318">
    <property type="entry name" value="SNc"/>
    <property type="match status" value="1"/>
</dbReference>
<dbReference type="SUPFAM" id="SSF50199">
    <property type="entry name" value="Staphylococcal nuclease"/>
    <property type="match status" value="1"/>
</dbReference>
<dbReference type="PROSITE" id="PS50830">
    <property type="entry name" value="TNASE_3"/>
    <property type="match status" value="1"/>
</dbReference>
<name>LCL3_PYRTR</name>
<protein>
    <recommendedName>
        <fullName>Probable endonuclease lcl3</fullName>
        <ecNumber>3.1.-.-</ecNumber>
    </recommendedName>
</protein>